<proteinExistence type="inferred from homology"/>
<feature type="signal peptide" evidence="6">
    <location>
        <begin position="1"/>
        <end position="19"/>
    </location>
</feature>
<feature type="chain" id="PRO_0000394060" description="AA9 family lytic polysaccharide monooxygenase A">
    <location>
        <begin position="20"/>
        <end position="353"/>
    </location>
</feature>
<feature type="domain" description="CBM1" evidence="7">
    <location>
        <begin position="315"/>
        <end position="351"/>
    </location>
</feature>
<feature type="region of interest" description="Disordered" evidence="8">
    <location>
        <begin position="266"/>
        <end position="316"/>
    </location>
</feature>
<feature type="compositionally biased region" description="Low complexity" evidence="8">
    <location>
        <begin position="266"/>
        <end position="276"/>
    </location>
</feature>
<feature type="compositionally biased region" description="Acidic residues" evidence="8">
    <location>
        <begin position="279"/>
        <end position="290"/>
    </location>
</feature>
<feature type="compositionally biased region" description="Low complexity" evidence="8">
    <location>
        <begin position="291"/>
        <end position="304"/>
    </location>
</feature>
<feature type="binding site" evidence="1">
    <location>
        <position position="20"/>
    </location>
    <ligand>
        <name>Cu(2+)</name>
        <dbReference type="ChEBI" id="CHEBI:29036"/>
        <note>catalytic</note>
    </ligand>
</feature>
<feature type="binding site" evidence="1">
    <location>
        <position position="102"/>
    </location>
    <ligand>
        <name>Cu(2+)</name>
        <dbReference type="ChEBI" id="CHEBI:29036"/>
        <note>catalytic</note>
    </ligand>
</feature>
<feature type="binding site" evidence="2">
    <location>
        <position position="169"/>
    </location>
    <ligand>
        <name>O2</name>
        <dbReference type="ChEBI" id="CHEBI:15379"/>
    </ligand>
</feature>
<feature type="binding site" evidence="1">
    <location>
        <position position="180"/>
    </location>
    <ligand>
        <name>Cu(2+)</name>
        <dbReference type="ChEBI" id="CHEBI:29036"/>
        <note>catalytic</note>
    </ligand>
</feature>
<feature type="glycosylation site" description="N-linked (GlcNAc...) asparagine" evidence="6">
    <location>
        <position position="327"/>
    </location>
</feature>
<feature type="disulfide bond" evidence="1">
    <location>
        <begin position="62"/>
        <end position="183"/>
    </location>
</feature>
<protein>
    <recommendedName>
        <fullName evidence="3">AA9 family lytic polysaccharide monooxygenase A</fullName>
        <shortName evidence="3">AA9A</shortName>
        <ecNumber evidence="3">1.14.99.56</ecNumber>
    </recommendedName>
    <alternativeName>
        <fullName evidence="9">Cellulase AA9A</fullName>
    </alternativeName>
    <alternativeName>
        <fullName evidence="9">Endo-beta-1,4-glucanase AA9A</fullName>
        <shortName evidence="9">Endoglucanase AA9A</shortName>
    </alternativeName>
    <alternativeName>
        <fullName evidence="9">Glycosyl hydrolase 61 family protein AA9A</fullName>
    </alternativeName>
</protein>
<comment type="function">
    <text evidence="3">Lytic polysaccharide monooxygenase (LPMO) that depolymerizes crystalline and amorphous polysaccharides via the oxidation of scissile alpha- or beta-(1-4)-glycosidic bonds, yielding C4 oxidation products (By similarity). Catalysis by LPMOs requires the reduction of the active-site copper from Cu(II) to Cu(I) by a reducing agent and H(2)O(2) or O(2) as a cosubstrate (By similarity).</text>
</comment>
<comment type="catalytic activity">
    <reaction evidence="3">
        <text>[(1-&gt;4)-beta-D-glucosyl]n+m + reduced acceptor + O2 = 4-dehydro-beta-D-glucosyl-[(1-&gt;4)-beta-D-glucosyl]n-1 + [(1-&gt;4)-beta-D-glucosyl]m + acceptor + H2O.</text>
        <dbReference type="EC" id="1.14.99.56"/>
    </reaction>
</comment>
<comment type="cofactor">
    <cofactor evidence="4">
        <name>Cu(2+)</name>
        <dbReference type="ChEBI" id="CHEBI:29036"/>
    </cofactor>
    <text evidence="4">Binds 1 copper ion per subunit.</text>
</comment>
<comment type="subcellular location">
    <subcellularLocation>
        <location evidence="3">Secreted</location>
    </subcellularLocation>
</comment>
<comment type="domain">
    <text evidence="5">Has a modular structure: an endo-beta-1,4-glucanase catalytic module at the N-terminus, a linker rich in serines and threonines, and a C-terminal carbohydrate-binding module (CBM). The CBM domain is essential for binding to and subsequent oxidative degradation of polysaccharide substrate.</text>
</comment>
<comment type="biotechnology">
    <text evidence="4">Lignocellulose is the most abundant polymeric composite on Earth and is a recalcitrant but promising renewable substrate for industrial biotechnology applications. Together with cellobiose dehydrogenases (CDHs) an enzymatic system capable of oxidative cellulose cleavage is formed, which increases the efficiency of cellulases and put LPMOs at focus of biofuel research.</text>
</comment>
<comment type="similarity">
    <text evidence="9">Belongs to the polysaccharide monooxygenase AA9 family.</text>
</comment>
<evidence type="ECO:0000250" key="1">
    <source>
        <dbReference type="UniProtKB" id="A0A223GEC9"/>
    </source>
</evidence>
<evidence type="ECO:0000250" key="2">
    <source>
        <dbReference type="UniProtKB" id="Q1K8B6"/>
    </source>
</evidence>
<evidence type="ECO:0000250" key="3">
    <source>
        <dbReference type="UniProtKB" id="Q2US83"/>
    </source>
</evidence>
<evidence type="ECO:0000250" key="4">
    <source>
        <dbReference type="UniProtKB" id="Q4WP32"/>
    </source>
</evidence>
<evidence type="ECO:0000250" key="5">
    <source>
        <dbReference type="UniProtKB" id="Q7S439"/>
    </source>
</evidence>
<evidence type="ECO:0000255" key="6"/>
<evidence type="ECO:0000255" key="7">
    <source>
        <dbReference type="PROSITE-ProRule" id="PRU00597"/>
    </source>
</evidence>
<evidence type="ECO:0000256" key="8">
    <source>
        <dbReference type="SAM" id="MobiDB-lite"/>
    </source>
</evidence>
<evidence type="ECO:0000305" key="9"/>
<gene>
    <name type="primary">eglD</name>
    <name type="ORF">ACLA_059790</name>
</gene>
<keyword id="KW-0119">Carbohydrate metabolism</keyword>
<keyword id="KW-0136">Cellulose degradation</keyword>
<keyword id="KW-0186">Copper</keyword>
<keyword id="KW-1015">Disulfide bond</keyword>
<keyword id="KW-0325">Glycoprotein</keyword>
<keyword id="KW-0479">Metal-binding</keyword>
<keyword id="KW-0503">Monooxygenase</keyword>
<keyword id="KW-0560">Oxidoreductase</keyword>
<keyword id="KW-0624">Polysaccharide degradation</keyword>
<keyword id="KW-1185">Reference proteome</keyword>
<keyword id="KW-0964">Secreted</keyword>
<keyword id="KW-0732">Signal</keyword>
<sequence length="353" mass="36822">MKSTFGLLALAAAAKMAHAHATVQAIWINGVDQGAGNSASGYIRSPPNNSPLVDVTSADMTCNVNGKNPVAKTLPVKAGDKITFEWHHTDRSPSDDIIASSHRGPIMVYMAPTAKGAAGNGWVKIAEEGYSNGKWAVDNLIANRGKHSIVVPDVPAGDYLFRPEIIALHEGNRLGGAQFYMECVQVKVTSNGANALPAGVSIPGAYKATDPGVHFDIYNSFSSYPMPGPAVWNGASAAGSAPAPTAAPTQKPVVTAAPTTLATLVKPTTTTAAAPAETDSCDGDDDDYETETPAPQASATQAPAPQRPAPQTPSGSVKEWYQCGGINYTGAKNCESGLVCKEWNPYYHQCIKA</sequence>
<dbReference type="EC" id="1.14.99.56" evidence="3"/>
<dbReference type="EMBL" id="DS026990">
    <property type="protein sequence ID" value="EAW15312.1"/>
    <property type="molecule type" value="Genomic_DNA"/>
</dbReference>
<dbReference type="RefSeq" id="XP_001276738.1">
    <property type="nucleotide sequence ID" value="XM_001276737.1"/>
</dbReference>
<dbReference type="SMR" id="A1C4H2"/>
<dbReference type="STRING" id="344612.A1C4H2"/>
<dbReference type="GlyCosmos" id="A1C4H2">
    <property type="glycosylation" value="1 site, No reported glycans"/>
</dbReference>
<dbReference type="EnsemblFungi" id="EAW15312">
    <property type="protein sequence ID" value="EAW15312"/>
    <property type="gene ID" value="ACLA_059790"/>
</dbReference>
<dbReference type="GeneID" id="4708945"/>
<dbReference type="KEGG" id="act:ACLA_059790"/>
<dbReference type="VEuPathDB" id="FungiDB:ACLA_059790"/>
<dbReference type="eggNOG" id="ENOG502RXMI">
    <property type="taxonomic scope" value="Eukaryota"/>
</dbReference>
<dbReference type="HOGENOM" id="CLU_031730_0_0_1"/>
<dbReference type="OMA" id="YIDSPPN"/>
<dbReference type="OrthoDB" id="5558646at2759"/>
<dbReference type="Proteomes" id="UP000006701">
    <property type="component" value="Unassembled WGS sequence"/>
</dbReference>
<dbReference type="GO" id="GO:0005576">
    <property type="term" value="C:extracellular region"/>
    <property type="evidence" value="ECO:0007669"/>
    <property type="project" value="UniProtKB-SubCell"/>
</dbReference>
<dbReference type="GO" id="GO:0008810">
    <property type="term" value="F:cellulase activity"/>
    <property type="evidence" value="ECO:0007669"/>
    <property type="project" value="UniProtKB-EC"/>
</dbReference>
<dbReference type="GO" id="GO:0030248">
    <property type="term" value="F:cellulose binding"/>
    <property type="evidence" value="ECO:0007669"/>
    <property type="project" value="InterPro"/>
</dbReference>
<dbReference type="GO" id="GO:0046872">
    <property type="term" value="F:metal ion binding"/>
    <property type="evidence" value="ECO:0007669"/>
    <property type="project" value="UniProtKB-KW"/>
</dbReference>
<dbReference type="GO" id="GO:0004497">
    <property type="term" value="F:monooxygenase activity"/>
    <property type="evidence" value="ECO:0007669"/>
    <property type="project" value="UniProtKB-KW"/>
</dbReference>
<dbReference type="GO" id="GO:0030245">
    <property type="term" value="P:cellulose catabolic process"/>
    <property type="evidence" value="ECO:0007669"/>
    <property type="project" value="UniProtKB-KW"/>
</dbReference>
<dbReference type="CDD" id="cd21175">
    <property type="entry name" value="LPMO_AA9"/>
    <property type="match status" value="1"/>
</dbReference>
<dbReference type="Gene3D" id="2.70.50.70">
    <property type="match status" value="1"/>
</dbReference>
<dbReference type="InterPro" id="IPR049892">
    <property type="entry name" value="AA9"/>
</dbReference>
<dbReference type="InterPro" id="IPR005103">
    <property type="entry name" value="AA9_LPMO"/>
</dbReference>
<dbReference type="InterPro" id="IPR035971">
    <property type="entry name" value="CBD_sf"/>
</dbReference>
<dbReference type="InterPro" id="IPR000254">
    <property type="entry name" value="Cellulose-bd_dom_fun"/>
</dbReference>
<dbReference type="PANTHER" id="PTHR33353:SF17">
    <property type="entry name" value="ENDO-BETA-1,4-GLUCANASE D"/>
    <property type="match status" value="1"/>
</dbReference>
<dbReference type="PANTHER" id="PTHR33353">
    <property type="entry name" value="PUTATIVE (AFU_ORTHOLOGUE AFUA_1G12560)-RELATED"/>
    <property type="match status" value="1"/>
</dbReference>
<dbReference type="Pfam" id="PF03443">
    <property type="entry name" value="AA9"/>
    <property type="match status" value="1"/>
</dbReference>
<dbReference type="Pfam" id="PF00734">
    <property type="entry name" value="CBM_1"/>
    <property type="match status" value="1"/>
</dbReference>
<dbReference type="SMART" id="SM00236">
    <property type="entry name" value="fCBD"/>
    <property type="match status" value="1"/>
</dbReference>
<dbReference type="SUPFAM" id="SSF57180">
    <property type="entry name" value="Cellulose-binding domain"/>
    <property type="match status" value="1"/>
</dbReference>
<dbReference type="PROSITE" id="PS00562">
    <property type="entry name" value="CBM1_1"/>
    <property type="match status" value="1"/>
</dbReference>
<dbReference type="PROSITE" id="PS51164">
    <property type="entry name" value="CBM1_2"/>
    <property type="match status" value="1"/>
</dbReference>
<reference key="1">
    <citation type="journal article" date="2008" name="PLoS Genet.">
        <title>Genomic islands in the pathogenic filamentous fungus Aspergillus fumigatus.</title>
        <authorList>
            <person name="Fedorova N.D."/>
            <person name="Khaldi N."/>
            <person name="Joardar V.S."/>
            <person name="Maiti R."/>
            <person name="Amedeo P."/>
            <person name="Anderson M.J."/>
            <person name="Crabtree J."/>
            <person name="Silva J.C."/>
            <person name="Badger J.H."/>
            <person name="Albarraq A."/>
            <person name="Angiuoli S."/>
            <person name="Bussey H."/>
            <person name="Bowyer P."/>
            <person name="Cotty P.J."/>
            <person name="Dyer P.S."/>
            <person name="Egan A."/>
            <person name="Galens K."/>
            <person name="Fraser-Liggett C.M."/>
            <person name="Haas B.J."/>
            <person name="Inman J.M."/>
            <person name="Kent R."/>
            <person name="Lemieux S."/>
            <person name="Malavazi I."/>
            <person name="Orvis J."/>
            <person name="Roemer T."/>
            <person name="Ronning C.M."/>
            <person name="Sundaram J.P."/>
            <person name="Sutton G."/>
            <person name="Turner G."/>
            <person name="Venter J.C."/>
            <person name="White O.R."/>
            <person name="Whitty B.R."/>
            <person name="Youngman P."/>
            <person name="Wolfe K.H."/>
            <person name="Goldman G.H."/>
            <person name="Wortman J.R."/>
            <person name="Jiang B."/>
            <person name="Denning D.W."/>
            <person name="Nierman W.C."/>
        </authorList>
    </citation>
    <scope>NUCLEOTIDE SEQUENCE [LARGE SCALE GENOMIC DNA]</scope>
    <source>
        <strain>ATCC 1007 / CBS 513.65 / DSM 816 / NCTC 3887 / NRRL 1 / QM 1276 / 107</strain>
    </source>
</reference>
<organism>
    <name type="scientific">Aspergillus clavatus (strain ATCC 1007 / CBS 513.65 / DSM 816 / NCTC 3887 / NRRL 1 / QM 1276 / 107)</name>
    <dbReference type="NCBI Taxonomy" id="344612"/>
    <lineage>
        <taxon>Eukaryota</taxon>
        <taxon>Fungi</taxon>
        <taxon>Dikarya</taxon>
        <taxon>Ascomycota</taxon>
        <taxon>Pezizomycotina</taxon>
        <taxon>Eurotiomycetes</taxon>
        <taxon>Eurotiomycetidae</taxon>
        <taxon>Eurotiales</taxon>
        <taxon>Aspergillaceae</taxon>
        <taxon>Aspergillus</taxon>
        <taxon>Aspergillus subgen. Fumigati</taxon>
    </lineage>
</organism>
<accession>A1C4H2</accession>
<name>LP9A_ASPCL</name>